<sequence>MAKKSMVEREKKRERLVQKYAAKRAALNEIIHDQSLPMEERFKASLKLAELPRNSSATRLHNRCQLTGRPHAYYRKLKLSRIMLRELGSFGQIPGMVKSSW</sequence>
<protein>
    <recommendedName>
        <fullName evidence="1">Small ribosomal subunit protein uS14</fullName>
    </recommendedName>
    <alternativeName>
        <fullName evidence="2">30S ribosomal protein S14</fullName>
    </alternativeName>
</protein>
<feature type="chain" id="PRO_1000128479" description="Small ribosomal subunit protein uS14">
    <location>
        <begin position="1"/>
        <end position="101"/>
    </location>
</feature>
<proteinExistence type="inferred from homology"/>
<keyword id="KW-1185">Reference proteome</keyword>
<keyword id="KW-0687">Ribonucleoprotein</keyword>
<keyword id="KW-0689">Ribosomal protein</keyword>
<keyword id="KW-0694">RNA-binding</keyword>
<keyword id="KW-0699">rRNA-binding</keyword>
<dbReference type="EMBL" id="CP000489">
    <property type="protein sequence ID" value="ABL68884.1"/>
    <property type="molecule type" value="Genomic_DNA"/>
</dbReference>
<dbReference type="RefSeq" id="WP_011747112.1">
    <property type="nucleotide sequence ID" value="NC_008686.1"/>
</dbReference>
<dbReference type="SMR" id="A1B040"/>
<dbReference type="STRING" id="318586.Pden_0772"/>
<dbReference type="EnsemblBacteria" id="ABL68884">
    <property type="protein sequence ID" value="ABL68884"/>
    <property type="gene ID" value="Pden_0772"/>
</dbReference>
<dbReference type="GeneID" id="93451996"/>
<dbReference type="KEGG" id="pde:Pden_0772"/>
<dbReference type="eggNOG" id="COG0199">
    <property type="taxonomic scope" value="Bacteria"/>
</dbReference>
<dbReference type="HOGENOM" id="CLU_139869_0_1_5"/>
<dbReference type="OrthoDB" id="9810484at2"/>
<dbReference type="Proteomes" id="UP000000361">
    <property type="component" value="Chromosome 1"/>
</dbReference>
<dbReference type="GO" id="GO:0005737">
    <property type="term" value="C:cytoplasm"/>
    <property type="evidence" value="ECO:0007669"/>
    <property type="project" value="UniProtKB-ARBA"/>
</dbReference>
<dbReference type="GO" id="GO:0015935">
    <property type="term" value="C:small ribosomal subunit"/>
    <property type="evidence" value="ECO:0007669"/>
    <property type="project" value="TreeGrafter"/>
</dbReference>
<dbReference type="GO" id="GO:0019843">
    <property type="term" value="F:rRNA binding"/>
    <property type="evidence" value="ECO:0007669"/>
    <property type="project" value="UniProtKB-UniRule"/>
</dbReference>
<dbReference type="GO" id="GO:0003735">
    <property type="term" value="F:structural constituent of ribosome"/>
    <property type="evidence" value="ECO:0007669"/>
    <property type="project" value="InterPro"/>
</dbReference>
<dbReference type="GO" id="GO:0006412">
    <property type="term" value="P:translation"/>
    <property type="evidence" value="ECO:0007669"/>
    <property type="project" value="UniProtKB-UniRule"/>
</dbReference>
<dbReference type="FunFam" id="1.10.287.1480:FF:000001">
    <property type="entry name" value="30S ribosomal protein S14"/>
    <property type="match status" value="1"/>
</dbReference>
<dbReference type="Gene3D" id="1.10.287.1480">
    <property type="match status" value="1"/>
</dbReference>
<dbReference type="HAMAP" id="MF_00537">
    <property type="entry name" value="Ribosomal_uS14_1"/>
    <property type="match status" value="1"/>
</dbReference>
<dbReference type="InterPro" id="IPR001209">
    <property type="entry name" value="Ribosomal_uS14"/>
</dbReference>
<dbReference type="InterPro" id="IPR023036">
    <property type="entry name" value="Ribosomal_uS14_bac/plastid"/>
</dbReference>
<dbReference type="InterPro" id="IPR018271">
    <property type="entry name" value="Ribosomal_uS14_CS"/>
</dbReference>
<dbReference type="NCBIfam" id="NF006477">
    <property type="entry name" value="PRK08881.1"/>
    <property type="match status" value="1"/>
</dbReference>
<dbReference type="PANTHER" id="PTHR19836">
    <property type="entry name" value="30S RIBOSOMAL PROTEIN S14"/>
    <property type="match status" value="1"/>
</dbReference>
<dbReference type="PANTHER" id="PTHR19836:SF19">
    <property type="entry name" value="SMALL RIBOSOMAL SUBUNIT PROTEIN US14M"/>
    <property type="match status" value="1"/>
</dbReference>
<dbReference type="Pfam" id="PF00253">
    <property type="entry name" value="Ribosomal_S14"/>
    <property type="match status" value="1"/>
</dbReference>
<dbReference type="SUPFAM" id="SSF57716">
    <property type="entry name" value="Glucocorticoid receptor-like (DNA-binding domain)"/>
    <property type="match status" value="1"/>
</dbReference>
<dbReference type="PROSITE" id="PS00527">
    <property type="entry name" value="RIBOSOMAL_S14"/>
    <property type="match status" value="1"/>
</dbReference>
<gene>
    <name evidence="1" type="primary">rpsN</name>
    <name type="ordered locus">Pden_0772</name>
</gene>
<evidence type="ECO:0000255" key="1">
    <source>
        <dbReference type="HAMAP-Rule" id="MF_00537"/>
    </source>
</evidence>
<evidence type="ECO:0000305" key="2"/>
<organism>
    <name type="scientific">Paracoccus denitrificans (strain Pd 1222)</name>
    <dbReference type="NCBI Taxonomy" id="318586"/>
    <lineage>
        <taxon>Bacteria</taxon>
        <taxon>Pseudomonadati</taxon>
        <taxon>Pseudomonadota</taxon>
        <taxon>Alphaproteobacteria</taxon>
        <taxon>Rhodobacterales</taxon>
        <taxon>Paracoccaceae</taxon>
        <taxon>Paracoccus</taxon>
    </lineage>
</organism>
<reference key="1">
    <citation type="submission" date="2006-12" db="EMBL/GenBank/DDBJ databases">
        <title>Complete sequence of chromosome 1 of Paracoccus denitrificans PD1222.</title>
        <authorList>
            <person name="Copeland A."/>
            <person name="Lucas S."/>
            <person name="Lapidus A."/>
            <person name="Barry K."/>
            <person name="Detter J.C."/>
            <person name="Glavina del Rio T."/>
            <person name="Hammon N."/>
            <person name="Israni S."/>
            <person name="Dalin E."/>
            <person name="Tice H."/>
            <person name="Pitluck S."/>
            <person name="Munk A.C."/>
            <person name="Brettin T."/>
            <person name="Bruce D."/>
            <person name="Han C."/>
            <person name="Tapia R."/>
            <person name="Gilna P."/>
            <person name="Schmutz J."/>
            <person name="Larimer F."/>
            <person name="Land M."/>
            <person name="Hauser L."/>
            <person name="Kyrpides N."/>
            <person name="Lykidis A."/>
            <person name="Spiro S."/>
            <person name="Richardson D.J."/>
            <person name="Moir J.W.B."/>
            <person name="Ferguson S.J."/>
            <person name="van Spanning R.J.M."/>
            <person name="Richardson P."/>
        </authorList>
    </citation>
    <scope>NUCLEOTIDE SEQUENCE [LARGE SCALE GENOMIC DNA]</scope>
    <source>
        <strain>Pd 1222</strain>
    </source>
</reference>
<accession>A1B040</accession>
<name>RS14_PARDP</name>
<comment type="function">
    <text evidence="1">Binds 16S rRNA, required for the assembly of 30S particles and may also be responsible for determining the conformation of the 16S rRNA at the A site.</text>
</comment>
<comment type="subunit">
    <text evidence="1">Part of the 30S ribosomal subunit. Contacts proteins S3 and S10.</text>
</comment>
<comment type="similarity">
    <text evidence="1">Belongs to the universal ribosomal protein uS14 family.</text>
</comment>